<organism>
    <name type="scientific">Ectopseudomonas mendocina (strain ymp)</name>
    <name type="common">Pseudomonas mendocina</name>
    <dbReference type="NCBI Taxonomy" id="399739"/>
    <lineage>
        <taxon>Bacteria</taxon>
        <taxon>Pseudomonadati</taxon>
        <taxon>Pseudomonadota</taxon>
        <taxon>Gammaproteobacteria</taxon>
        <taxon>Pseudomonadales</taxon>
        <taxon>Pseudomonadaceae</taxon>
        <taxon>Ectopseudomonas</taxon>
    </lineage>
</organism>
<sequence>MAGAKEIRSKIASIKSTQKITSAMEKVAVSKMRKAQQRMAAGRPYAERIRQVIGHLAKANPEYRHSFMVERDVKRVGYIVVTSDRGLCGGLNINLFKALLKSLKEWRDQKVEADFCVVGTKGASFFRSNGGNVVAAISKLGEEPSINDLIGSVKVVLDAYAEGRIDRLYLVSNKFVNTMTQKPEVQQLLPLAASDAQGVQKGLWDYVYEPDAQQLLDALLVRYIESQVYQSVVENSACEQAARMIAMKNATDNAGDLIKDLQLVYNKARQAAITQEISEIVGGAAAV</sequence>
<accession>A4Y188</accession>
<reference key="1">
    <citation type="submission" date="2007-04" db="EMBL/GenBank/DDBJ databases">
        <title>Complete sequence of Pseudomonas mendocina ymp.</title>
        <authorList>
            <consortium name="US DOE Joint Genome Institute"/>
            <person name="Copeland A."/>
            <person name="Lucas S."/>
            <person name="Lapidus A."/>
            <person name="Barry K."/>
            <person name="Glavina del Rio T."/>
            <person name="Dalin E."/>
            <person name="Tice H."/>
            <person name="Pitluck S."/>
            <person name="Kiss H."/>
            <person name="Brettin T."/>
            <person name="Detter J.C."/>
            <person name="Bruce D."/>
            <person name="Han C."/>
            <person name="Schmutz J."/>
            <person name="Larimer F."/>
            <person name="Land M."/>
            <person name="Hauser L."/>
            <person name="Kyrpides N."/>
            <person name="Mikhailova N."/>
            <person name="Hersman L."/>
            <person name="Dubois J."/>
            <person name="Maurice P."/>
            <person name="Richardson P."/>
        </authorList>
    </citation>
    <scope>NUCLEOTIDE SEQUENCE [LARGE SCALE GENOMIC DNA]</scope>
    <source>
        <strain>ymp</strain>
    </source>
</reference>
<keyword id="KW-0066">ATP synthesis</keyword>
<keyword id="KW-0997">Cell inner membrane</keyword>
<keyword id="KW-1003">Cell membrane</keyword>
<keyword id="KW-0139">CF(1)</keyword>
<keyword id="KW-0375">Hydrogen ion transport</keyword>
<keyword id="KW-0406">Ion transport</keyword>
<keyword id="KW-0472">Membrane</keyword>
<keyword id="KW-0813">Transport</keyword>
<proteinExistence type="inferred from homology"/>
<protein>
    <recommendedName>
        <fullName evidence="1">ATP synthase gamma chain</fullName>
    </recommendedName>
    <alternativeName>
        <fullName evidence="1">ATP synthase F1 sector gamma subunit</fullName>
    </alternativeName>
    <alternativeName>
        <fullName evidence="1">F-ATPase gamma subunit</fullName>
    </alternativeName>
</protein>
<gene>
    <name evidence="1" type="primary">atpG</name>
    <name type="ordered locus">Pmen_4608</name>
</gene>
<evidence type="ECO:0000255" key="1">
    <source>
        <dbReference type="HAMAP-Rule" id="MF_00815"/>
    </source>
</evidence>
<dbReference type="EMBL" id="CP000680">
    <property type="protein sequence ID" value="ABP87354.1"/>
    <property type="molecule type" value="Genomic_DNA"/>
</dbReference>
<dbReference type="SMR" id="A4Y188"/>
<dbReference type="STRING" id="399739.Pmen_4608"/>
<dbReference type="KEGG" id="pmy:Pmen_4608"/>
<dbReference type="PATRIC" id="fig|399739.8.peg.4673"/>
<dbReference type="eggNOG" id="COG0224">
    <property type="taxonomic scope" value="Bacteria"/>
</dbReference>
<dbReference type="HOGENOM" id="CLU_050669_0_1_6"/>
<dbReference type="OrthoDB" id="9812769at2"/>
<dbReference type="GO" id="GO:0005886">
    <property type="term" value="C:plasma membrane"/>
    <property type="evidence" value="ECO:0007669"/>
    <property type="project" value="UniProtKB-SubCell"/>
</dbReference>
<dbReference type="GO" id="GO:0045259">
    <property type="term" value="C:proton-transporting ATP synthase complex"/>
    <property type="evidence" value="ECO:0007669"/>
    <property type="project" value="UniProtKB-KW"/>
</dbReference>
<dbReference type="GO" id="GO:0005524">
    <property type="term" value="F:ATP binding"/>
    <property type="evidence" value="ECO:0007669"/>
    <property type="project" value="UniProtKB-UniRule"/>
</dbReference>
<dbReference type="GO" id="GO:0046933">
    <property type="term" value="F:proton-transporting ATP synthase activity, rotational mechanism"/>
    <property type="evidence" value="ECO:0007669"/>
    <property type="project" value="UniProtKB-UniRule"/>
</dbReference>
<dbReference type="GO" id="GO:0042777">
    <property type="term" value="P:proton motive force-driven plasma membrane ATP synthesis"/>
    <property type="evidence" value="ECO:0007669"/>
    <property type="project" value="UniProtKB-UniRule"/>
</dbReference>
<dbReference type="CDD" id="cd12151">
    <property type="entry name" value="F1-ATPase_gamma"/>
    <property type="match status" value="1"/>
</dbReference>
<dbReference type="FunFam" id="1.10.287.80:FF:000005">
    <property type="entry name" value="ATP synthase gamma chain"/>
    <property type="match status" value="1"/>
</dbReference>
<dbReference type="FunFam" id="3.40.1380.10:FF:000001">
    <property type="entry name" value="ATP synthase gamma chain"/>
    <property type="match status" value="1"/>
</dbReference>
<dbReference type="Gene3D" id="3.40.1380.10">
    <property type="match status" value="1"/>
</dbReference>
<dbReference type="Gene3D" id="1.10.287.80">
    <property type="entry name" value="ATP synthase, gamma subunit, helix hairpin domain"/>
    <property type="match status" value="1"/>
</dbReference>
<dbReference type="HAMAP" id="MF_00815">
    <property type="entry name" value="ATP_synth_gamma_bact"/>
    <property type="match status" value="1"/>
</dbReference>
<dbReference type="InterPro" id="IPR035968">
    <property type="entry name" value="ATP_synth_F1_ATPase_gsu"/>
</dbReference>
<dbReference type="InterPro" id="IPR000131">
    <property type="entry name" value="ATP_synth_F1_gsu"/>
</dbReference>
<dbReference type="InterPro" id="IPR023632">
    <property type="entry name" value="ATP_synth_F1_gsu_CS"/>
</dbReference>
<dbReference type="NCBIfam" id="TIGR01146">
    <property type="entry name" value="ATPsyn_F1gamma"/>
    <property type="match status" value="1"/>
</dbReference>
<dbReference type="NCBIfam" id="NF004144">
    <property type="entry name" value="PRK05621.1-1"/>
    <property type="match status" value="1"/>
</dbReference>
<dbReference type="PANTHER" id="PTHR11693">
    <property type="entry name" value="ATP SYNTHASE GAMMA CHAIN"/>
    <property type="match status" value="1"/>
</dbReference>
<dbReference type="PANTHER" id="PTHR11693:SF22">
    <property type="entry name" value="ATP SYNTHASE SUBUNIT GAMMA, MITOCHONDRIAL"/>
    <property type="match status" value="1"/>
</dbReference>
<dbReference type="Pfam" id="PF00231">
    <property type="entry name" value="ATP-synt"/>
    <property type="match status" value="1"/>
</dbReference>
<dbReference type="PRINTS" id="PR00126">
    <property type="entry name" value="ATPASEGAMMA"/>
</dbReference>
<dbReference type="SUPFAM" id="SSF52943">
    <property type="entry name" value="ATP synthase (F1-ATPase), gamma subunit"/>
    <property type="match status" value="1"/>
</dbReference>
<dbReference type="PROSITE" id="PS00153">
    <property type="entry name" value="ATPASE_GAMMA"/>
    <property type="match status" value="1"/>
</dbReference>
<feature type="chain" id="PRO_1000053294" description="ATP synthase gamma chain">
    <location>
        <begin position="1"/>
        <end position="287"/>
    </location>
</feature>
<comment type="function">
    <text evidence="1">Produces ATP from ADP in the presence of a proton gradient across the membrane. The gamma chain is believed to be important in regulating ATPase activity and the flow of protons through the CF(0) complex.</text>
</comment>
<comment type="subunit">
    <text evidence="1">F-type ATPases have 2 components, CF(1) - the catalytic core - and CF(0) - the membrane proton channel. CF(1) has five subunits: alpha(3), beta(3), gamma(1), delta(1), epsilon(1). CF(0) has three main subunits: a, b and c.</text>
</comment>
<comment type="subcellular location">
    <subcellularLocation>
        <location evidence="1">Cell inner membrane</location>
        <topology evidence="1">Peripheral membrane protein</topology>
    </subcellularLocation>
</comment>
<comment type="similarity">
    <text evidence="1">Belongs to the ATPase gamma chain family.</text>
</comment>
<name>ATPG_ECTM1</name>